<sequence length="229" mass="26722">MPKHCFLGLLIMLLTTATETQPAHVSLKPQKVQFQSRNFHNILHWQPGNSLTSNGSVYFVQYKTYGQGQWKDKNDCWGTTALFCDLTKETLDPYEPYYGRVMMAWAGSYSEWTRTPRFTPWWETKLDPPVVTITRVNASLRVRLRPPELPHRNQTGKNTSMENYYNLVYRVSIINNSLEKEQKAYEGTQRAVEIQGLTPHCSYCVVAEMYQPMFDRRSPRSKERCVQIP</sequence>
<feature type="signal peptide" evidence="1">
    <location>
        <begin position="1"/>
        <end position="19"/>
    </location>
</feature>
<feature type="chain" id="PRO_0000011018" description="Interleukin-22 receptor subunit alpha-2">
    <location>
        <begin position="20"/>
        <end position="229"/>
    </location>
</feature>
<feature type="domain" description="Fibronectin type-III 1" evidence="5">
    <location>
        <begin position="28"/>
        <end position="127"/>
    </location>
</feature>
<feature type="domain" description="Fibronectin type-III 2" evidence="5">
    <location>
        <begin position="128"/>
        <end position="229"/>
    </location>
</feature>
<feature type="site" description="Critical for IL22-binding" evidence="1">
    <location>
        <position position="65"/>
    </location>
</feature>
<feature type="site" description="Critical for IL22-binding" evidence="1">
    <location>
        <position position="117"/>
    </location>
</feature>
<feature type="glycosylation site" description="N-linked (GlcNAc...) asparagine" evidence="4">
    <location>
        <position position="54"/>
    </location>
</feature>
<feature type="disulfide bond" evidence="2">
    <location>
        <begin position="76"/>
        <end position="84"/>
    </location>
</feature>
<feature type="disulfide bond" evidence="3">
    <location>
        <begin position="204"/>
        <end position="225"/>
    </location>
</feature>
<organism>
    <name type="scientific">Rattus norvegicus</name>
    <name type="common">Rat</name>
    <dbReference type="NCBI Taxonomy" id="10116"/>
    <lineage>
        <taxon>Eukaryota</taxon>
        <taxon>Metazoa</taxon>
        <taxon>Chordata</taxon>
        <taxon>Craniata</taxon>
        <taxon>Vertebrata</taxon>
        <taxon>Euteleostomi</taxon>
        <taxon>Mammalia</taxon>
        <taxon>Eutheria</taxon>
        <taxon>Euarchontoglires</taxon>
        <taxon>Glires</taxon>
        <taxon>Rodentia</taxon>
        <taxon>Myomorpha</taxon>
        <taxon>Muroidea</taxon>
        <taxon>Muridae</taxon>
        <taxon>Murinae</taxon>
        <taxon>Rattus</taxon>
    </lineage>
</organism>
<gene>
    <name type="primary">Il22ra2</name>
</gene>
<accession>Q7TNI4</accession>
<evidence type="ECO:0000250" key="1"/>
<evidence type="ECO:0000250" key="2">
    <source>
        <dbReference type="UniProtKB" id="Q8N6P7"/>
    </source>
</evidence>
<evidence type="ECO:0000250" key="3">
    <source>
        <dbReference type="UniProtKB" id="Q969J5"/>
    </source>
</evidence>
<evidence type="ECO:0000255" key="4"/>
<evidence type="ECO:0000255" key="5">
    <source>
        <dbReference type="PROSITE-ProRule" id="PRU00316"/>
    </source>
</evidence>
<evidence type="ECO:0000305" key="6"/>
<dbReference type="EMBL" id="AJ555485">
    <property type="protein sequence ID" value="CAD88475.1"/>
    <property type="molecule type" value="mRNA"/>
</dbReference>
<dbReference type="RefSeq" id="NP_001003404.1">
    <property type="nucleotide sequence ID" value="NM_001003404.2"/>
</dbReference>
<dbReference type="RefSeq" id="XP_017445017.1">
    <property type="nucleotide sequence ID" value="XM_017589528.1"/>
</dbReference>
<dbReference type="RefSeq" id="XP_017445018.1">
    <property type="nucleotide sequence ID" value="XM_017589529.1"/>
</dbReference>
<dbReference type="SMR" id="Q7TNI4"/>
<dbReference type="FunCoup" id="Q7TNI4">
    <property type="interactions" value="2"/>
</dbReference>
<dbReference type="STRING" id="10116.ENSRNOP00000016354"/>
<dbReference type="GlyCosmos" id="Q7TNI4">
    <property type="glycosylation" value="1 site, No reported glycans"/>
</dbReference>
<dbReference type="GlyGen" id="Q7TNI4">
    <property type="glycosylation" value="1 site"/>
</dbReference>
<dbReference type="PhosphoSitePlus" id="Q7TNI4"/>
<dbReference type="PaxDb" id="10116-ENSRNOP00000016354"/>
<dbReference type="GeneID" id="444986"/>
<dbReference type="KEGG" id="rno:444986"/>
<dbReference type="UCSC" id="RGD:1303169">
    <property type="organism name" value="rat"/>
</dbReference>
<dbReference type="AGR" id="RGD:1303169"/>
<dbReference type="CTD" id="116379"/>
<dbReference type="RGD" id="1303169">
    <property type="gene designation" value="Il22ra2"/>
</dbReference>
<dbReference type="VEuPathDB" id="HostDB:ENSRNOG00000012259"/>
<dbReference type="eggNOG" id="ENOG502S2NT">
    <property type="taxonomic scope" value="Eukaryota"/>
</dbReference>
<dbReference type="HOGENOM" id="CLU_081158_1_0_1"/>
<dbReference type="InParanoid" id="Q7TNI4"/>
<dbReference type="OMA" id="SMENYYE"/>
<dbReference type="PhylomeDB" id="Q7TNI4"/>
<dbReference type="TreeFam" id="TF332537"/>
<dbReference type="Reactome" id="R-RNO-8854691">
    <property type="pathway name" value="Interleukin-20 family signaling"/>
</dbReference>
<dbReference type="PRO" id="PR:Q7TNI4"/>
<dbReference type="Proteomes" id="UP000002494">
    <property type="component" value="Chromosome 1"/>
</dbReference>
<dbReference type="Bgee" id="ENSRNOG00000012259">
    <property type="expression patterns" value="Expressed in spleen and 9 other cell types or tissues"/>
</dbReference>
<dbReference type="GO" id="GO:0005829">
    <property type="term" value="C:cytosol"/>
    <property type="evidence" value="ECO:0000266"/>
    <property type="project" value="RGD"/>
</dbReference>
<dbReference type="GO" id="GO:0005576">
    <property type="term" value="C:extracellular region"/>
    <property type="evidence" value="ECO:0007669"/>
    <property type="project" value="UniProtKB-SubCell"/>
</dbReference>
<dbReference type="GO" id="GO:0005886">
    <property type="term" value="C:plasma membrane"/>
    <property type="evidence" value="ECO:0000318"/>
    <property type="project" value="GO_Central"/>
</dbReference>
<dbReference type="GO" id="GO:0004896">
    <property type="term" value="F:cytokine receptor activity"/>
    <property type="evidence" value="ECO:0000318"/>
    <property type="project" value="GO_Central"/>
</dbReference>
<dbReference type="GO" id="GO:0042017">
    <property type="term" value="F:interleukin-22 binding"/>
    <property type="evidence" value="ECO:0000266"/>
    <property type="project" value="RGD"/>
</dbReference>
<dbReference type="GO" id="GO:0042018">
    <property type="term" value="F:interleukin-22 receptor activity"/>
    <property type="evidence" value="ECO:0000266"/>
    <property type="project" value="RGD"/>
</dbReference>
<dbReference type="GO" id="GO:0019221">
    <property type="term" value="P:cytokine-mediated signaling pathway"/>
    <property type="evidence" value="ECO:0000318"/>
    <property type="project" value="GO_Central"/>
</dbReference>
<dbReference type="GO" id="GO:0050728">
    <property type="term" value="P:negative regulation of inflammatory response"/>
    <property type="evidence" value="ECO:0000266"/>
    <property type="project" value="RGD"/>
</dbReference>
<dbReference type="CDD" id="cd00063">
    <property type="entry name" value="FN3"/>
    <property type="match status" value="1"/>
</dbReference>
<dbReference type="FunFam" id="2.60.40.10:FF:000348">
    <property type="entry name" value="Interleukin 20 receptor subunit alpha"/>
    <property type="match status" value="1"/>
</dbReference>
<dbReference type="FunFam" id="2.60.40.10:FF:001095">
    <property type="entry name" value="Interleukin 22 receptor, alpha 2"/>
    <property type="match status" value="1"/>
</dbReference>
<dbReference type="Gene3D" id="2.60.40.10">
    <property type="entry name" value="Immunoglobulins"/>
    <property type="match status" value="2"/>
</dbReference>
<dbReference type="InterPro" id="IPR003961">
    <property type="entry name" value="FN3_dom"/>
</dbReference>
<dbReference type="InterPro" id="IPR036116">
    <property type="entry name" value="FN3_sf"/>
</dbReference>
<dbReference type="InterPro" id="IPR013783">
    <property type="entry name" value="Ig-like_fold"/>
</dbReference>
<dbReference type="InterPro" id="IPR015373">
    <property type="entry name" value="Interferon/interleukin_rcp_dom"/>
</dbReference>
<dbReference type="InterPro" id="IPR050650">
    <property type="entry name" value="Type-II_Cytokine-TF_Rcpt"/>
</dbReference>
<dbReference type="PANTHER" id="PTHR20859">
    <property type="entry name" value="INTERFERON/INTERLEUKIN RECEPTOR"/>
    <property type="match status" value="1"/>
</dbReference>
<dbReference type="PANTHER" id="PTHR20859:SF51">
    <property type="entry name" value="INTERLEUKIN-22 RECEPTOR SUBUNIT ALPHA-2"/>
    <property type="match status" value="1"/>
</dbReference>
<dbReference type="Pfam" id="PF09294">
    <property type="entry name" value="Interfer-bind"/>
    <property type="match status" value="1"/>
</dbReference>
<dbReference type="Pfam" id="PF01108">
    <property type="entry name" value="Tissue_fac"/>
    <property type="match status" value="1"/>
</dbReference>
<dbReference type="SUPFAM" id="SSF49265">
    <property type="entry name" value="Fibronectin type III"/>
    <property type="match status" value="2"/>
</dbReference>
<dbReference type="PROSITE" id="PS50853">
    <property type="entry name" value="FN3"/>
    <property type="match status" value="2"/>
</dbReference>
<name>I22R2_RAT</name>
<protein>
    <recommendedName>
        <fullName>Interleukin-22 receptor subunit alpha-2</fullName>
        <shortName>IL-22 receptor subunit alpha-2</shortName>
        <shortName>IL-22R-alpha-2</shortName>
        <shortName>IL-22RA2</shortName>
    </recommendedName>
    <alternativeName>
        <fullName>Cytokine receptor family type 2, soluble 1</fullName>
        <shortName>CRF2-S1</shortName>
    </alternativeName>
    <alternativeName>
        <fullName>Interleukin-22-binding protein</fullName>
        <shortName>IL-22BP</shortName>
        <shortName>IL22BP</shortName>
    </alternativeName>
</protein>
<keyword id="KW-1015">Disulfide bond</keyword>
<keyword id="KW-0325">Glycoprotein</keyword>
<keyword id="KW-0675">Receptor</keyword>
<keyword id="KW-1185">Reference proteome</keyword>
<keyword id="KW-0677">Repeat</keyword>
<keyword id="KW-0964">Secreted</keyword>
<keyword id="KW-0732">Signal</keyword>
<reference key="1">
    <citation type="journal article" date="2004" name="Genes Immun.">
        <title>Cloning of murine IL-22 receptor alpha 2 and comparison with its human counterpart.</title>
        <authorList>
            <person name="Weiss B."/>
            <person name="Wolk K."/>
            <person name="Gruenberg B.H."/>
            <person name="Volk H.D."/>
            <person name="Sterry W."/>
            <person name="Asadullah K."/>
            <person name="Sabat R."/>
        </authorList>
    </citation>
    <scope>NUCLEOTIDE SEQUENCE [MRNA]</scope>
    <source>
        <strain>Sprague-Dawley</strain>
        <tissue>Spleen</tissue>
    </source>
</reference>
<proteinExistence type="evidence at transcript level"/>
<comment type="function">
    <text>Receptor for IL22. Binds to IL22, prevents interaction with the functional IL-22R complex and blocks the activity of IL22 (in vitro). May play an important role as an IL22 antagonist in the regulation of inflammatory responses.</text>
</comment>
<comment type="subcellular location">
    <subcellularLocation>
        <location evidence="1">Secreted</location>
    </subcellularLocation>
</comment>
<comment type="similarity">
    <text evidence="6">Belongs to the type II cytokine receptor family.</text>
</comment>